<proteinExistence type="inferred from homology"/>
<comment type="function">
    <text evidence="1">Facilitates the functional incorporation of the urease nickel metallocenter. This process requires GTP hydrolysis, probably effectuated by UreG.</text>
</comment>
<comment type="subunit">
    <text evidence="1">Homodimer. UreD, UreF and UreG form a complex that acts as a GTP-hydrolysis-dependent molecular chaperone, activating the urease apoprotein by helping to assemble the nickel containing metallocenter of UreC. The UreE protein probably delivers the nickel.</text>
</comment>
<comment type="subcellular location">
    <subcellularLocation>
        <location evidence="1">Cytoplasm</location>
    </subcellularLocation>
</comment>
<comment type="similarity">
    <text evidence="1">Belongs to the SIMIBI class G3E GTPase family. UreG subfamily.</text>
</comment>
<accession>A4WEJ8</accession>
<organism>
    <name type="scientific">Enterobacter sp. (strain 638)</name>
    <dbReference type="NCBI Taxonomy" id="399742"/>
    <lineage>
        <taxon>Bacteria</taxon>
        <taxon>Pseudomonadati</taxon>
        <taxon>Pseudomonadota</taxon>
        <taxon>Gammaproteobacteria</taxon>
        <taxon>Enterobacterales</taxon>
        <taxon>Enterobacteriaceae</taxon>
        <taxon>Enterobacter</taxon>
    </lineage>
</organism>
<dbReference type="EMBL" id="CP000653">
    <property type="protein sequence ID" value="ABP62128.1"/>
    <property type="molecule type" value="Genomic_DNA"/>
</dbReference>
<dbReference type="RefSeq" id="WP_015960456.1">
    <property type="nucleotide sequence ID" value="NC_009436.1"/>
</dbReference>
<dbReference type="SMR" id="A4WEJ8"/>
<dbReference type="STRING" id="399742.Ent638_3469"/>
<dbReference type="KEGG" id="ent:Ent638_3469"/>
<dbReference type="eggNOG" id="COG0378">
    <property type="taxonomic scope" value="Bacteria"/>
</dbReference>
<dbReference type="HOGENOM" id="CLU_072144_1_0_6"/>
<dbReference type="OrthoDB" id="9802035at2"/>
<dbReference type="Proteomes" id="UP000000230">
    <property type="component" value="Chromosome"/>
</dbReference>
<dbReference type="GO" id="GO:0005737">
    <property type="term" value="C:cytoplasm"/>
    <property type="evidence" value="ECO:0007669"/>
    <property type="project" value="UniProtKB-SubCell"/>
</dbReference>
<dbReference type="GO" id="GO:0005525">
    <property type="term" value="F:GTP binding"/>
    <property type="evidence" value="ECO:0007669"/>
    <property type="project" value="UniProtKB-KW"/>
</dbReference>
<dbReference type="GO" id="GO:0003924">
    <property type="term" value="F:GTPase activity"/>
    <property type="evidence" value="ECO:0007669"/>
    <property type="project" value="InterPro"/>
</dbReference>
<dbReference type="GO" id="GO:0016151">
    <property type="term" value="F:nickel cation binding"/>
    <property type="evidence" value="ECO:0007669"/>
    <property type="project" value="UniProtKB-UniRule"/>
</dbReference>
<dbReference type="GO" id="GO:0043419">
    <property type="term" value="P:urea catabolic process"/>
    <property type="evidence" value="ECO:0007669"/>
    <property type="project" value="InterPro"/>
</dbReference>
<dbReference type="CDD" id="cd05540">
    <property type="entry name" value="UreG"/>
    <property type="match status" value="1"/>
</dbReference>
<dbReference type="FunFam" id="3.40.50.300:FF:000208">
    <property type="entry name" value="Urease accessory protein UreG"/>
    <property type="match status" value="1"/>
</dbReference>
<dbReference type="Gene3D" id="3.40.50.300">
    <property type="entry name" value="P-loop containing nucleotide triphosphate hydrolases"/>
    <property type="match status" value="1"/>
</dbReference>
<dbReference type="HAMAP" id="MF_01389">
    <property type="entry name" value="UreG"/>
    <property type="match status" value="1"/>
</dbReference>
<dbReference type="InterPro" id="IPR003495">
    <property type="entry name" value="CobW/HypB/UreG_nucleotide-bd"/>
</dbReference>
<dbReference type="InterPro" id="IPR027417">
    <property type="entry name" value="P-loop_NTPase"/>
</dbReference>
<dbReference type="InterPro" id="IPR004400">
    <property type="entry name" value="UreG"/>
</dbReference>
<dbReference type="NCBIfam" id="TIGR00101">
    <property type="entry name" value="ureG"/>
    <property type="match status" value="1"/>
</dbReference>
<dbReference type="PANTHER" id="PTHR31715">
    <property type="entry name" value="UREASE ACCESSORY PROTEIN G"/>
    <property type="match status" value="1"/>
</dbReference>
<dbReference type="PANTHER" id="PTHR31715:SF0">
    <property type="entry name" value="UREASE ACCESSORY PROTEIN G"/>
    <property type="match status" value="1"/>
</dbReference>
<dbReference type="Pfam" id="PF02492">
    <property type="entry name" value="cobW"/>
    <property type="match status" value="1"/>
</dbReference>
<dbReference type="PIRSF" id="PIRSF005624">
    <property type="entry name" value="Ni-bind_GTPase"/>
    <property type="match status" value="1"/>
</dbReference>
<dbReference type="SUPFAM" id="SSF52540">
    <property type="entry name" value="P-loop containing nucleoside triphosphate hydrolases"/>
    <property type="match status" value="1"/>
</dbReference>
<evidence type="ECO:0000255" key="1">
    <source>
        <dbReference type="HAMAP-Rule" id="MF_01389"/>
    </source>
</evidence>
<keyword id="KW-0143">Chaperone</keyword>
<keyword id="KW-0963">Cytoplasm</keyword>
<keyword id="KW-0342">GTP-binding</keyword>
<keyword id="KW-0996">Nickel insertion</keyword>
<keyword id="KW-0547">Nucleotide-binding</keyword>
<name>UREG_ENT38</name>
<protein>
    <recommendedName>
        <fullName evidence="1">Urease accessory protein UreG</fullName>
    </recommendedName>
</protein>
<gene>
    <name evidence="1" type="primary">ureG</name>
    <name type="ordered locus">Ent638_3469</name>
</gene>
<feature type="chain" id="PRO_0000347389" description="Urease accessory protein UreG">
    <location>
        <begin position="1"/>
        <end position="205"/>
    </location>
</feature>
<feature type="binding site" evidence="1">
    <location>
        <begin position="14"/>
        <end position="21"/>
    </location>
    <ligand>
        <name>GTP</name>
        <dbReference type="ChEBI" id="CHEBI:37565"/>
    </ligand>
</feature>
<reference key="1">
    <citation type="journal article" date="2010" name="PLoS Genet.">
        <title>Genome sequence of the plant growth promoting endophytic bacterium Enterobacter sp. 638.</title>
        <authorList>
            <person name="Taghavi S."/>
            <person name="van der Lelie D."/>
            <person name="Hoffman A."/>
            <person name="Zhang Y.B."/>
            <person name="Walla M.D."/>
            <person name="Vangronsveld J."/>
            <person name="Newman L."/>
            <person name="Monchy S."/>
        </authorList>
    </citation>
    <scope>NUCLEOTIDE SEQUENCE [LARGE SCALE GENOMIC DNA]</scope>
    <source>
        <strain>638</strain>
    </source>
</reference>
<sequence length="205" mass="22187">MADYKHPLRVGVGGPVGSGKTALLEALCKAMRDQYQLAVVTNDIYTKEDQRILTEAGALEPDRIVGVETGGCPHTAIREDASMNLAAVETLSEKFGNLDLIFVESGGDNLSATFSPELADLTIYVIDVAEGEKIPRKGGPGITKSDFLVINKTDLAPYVGASLEVMERDTNRMRGERPWTFTNLKVGDGLNKIIGFLEDKGMLKV</sequence>